<comment type="function">
    <text evidence="7 9">As cone-specific cGMP phosphodiesterase, it plays an essential role in light detection and cone phototransduction by rapidly decreasing intracellular levels of cGMP.</text>
</comment>
<comment type="catalytic activity">
    <reaction evidence="7 9">
        <text>3',5'-cyclic GMP + H2O = GMP + H(+)</text>
        <dbReference type="Rhea" id="RHEA:16957"/>
        <dbReference type="ChEBI" id="CHEBI:15377"/>
        <dbReference type="ChEBI" id="CHEBI:15378"/>
        <dbReference type="ChEBI" id="CHEBI:57746"/>
        <dbReference type="ChEBI" id="CHEBI:58115"/>
        <dbReference type="EC" id="3.1.4.35"/>
    </reaction>
</comment>
<comment type="cofactor">
    <cofactor evidence="1">
        <name>a divalent metal cation</name>
        <dbReference type="ChEBI" id="CHEBI:60240"/>
    </cofactor>
    <text evidence="1">Binds 2 divalent metal cations per subunit. Site 1 may preferentially bind zinc ions, while site 2 has a preference for magnesium and/or manganese ions.</text>
</comment>
<comment type="subunit">
    <text>Composed of two alpha' subunits that are associated with 3 smaller proteins of 11, 13, and 15 kDa.</text>
</comment>
<comment type="subcellular location">
    <subcellularLocation>
        <location evidence="11">Cell membrane</location>
        <topology evidence="11">Lipid-anchor</topology>
        <orientation evidence="11">Cytoplasmic side</orientation>
    </subcellularLocation>
</comment>
<comment type="disease" evidence="6">
    <disease id="DI-02491">
        <name>Cone dystrophy 4</name>
        <acronym>COD4</acronym>
        <description>An early-onset cone dystrophy. Cone dystrophies are retinal dystrophies characterized by progressive degeneration of the cone photoreceptors with preservation of rod function, as indicated by electroretinogram. However, some rod involvement may be present in some cone dystrophies, particularly at late stage. Affected individuals suffer from photophobia, loss of visual acuity, color vision and central visual field. Another sign is the absence of macular lesions for many years. Cone dystrophies are distinguished from the cone-rod dystrophies in which some loss of peripheral vision also occurs.</description>
        <dbReference type="MIM" id="613093"/>
    </disease>
    <text>The disease is caused by variants affecting the gene represented in this entry.</text>
</comment>
<comment type="disease" evidence="6 7 9">
    <disease id="DI-05080">
        <name>Achromatopsia 5</name>
        <acronym>ACHM5</acronym>
        <description>A form of achromatopsia, an ocular stationary disorder due to the absence of functioning cone photoreceptors in the retina. It is characterized by total colorblindness, low visual acuity, photophobia and nystagmus. ACHM5 inheritance is autosomal recessive.</description>
        <dbReference type="MIM" id="613093"/>
    </disease>
    <text>The disease is caused by variants affecting the gene represented in this entry.</text>
</comment>
<comment type="similarity">
    <text evidence="11">Belongs to the cyclic nucleotide phosphodiesterase family.</text>
</comment>
<protein>
    <recommendedName>
        <fullName>Cone cGMP-specific 3',5'-cyclic phosphodiesterase subunit alpha'</fullName>
        <ecNumber evidence="7 9">3.1.4.35</ecNumber>
    </recommendedName>
    <alternativeName>
        <fullName>cGMP phosphodiesterase 6C</fullName>
    </alternativeName>
</protein>
<gene>
    <name type="primary">PDE6C</name>
    <name type="synonym">PDEA2</name>
</gene>
<organism>
    <name type="scientific">Homo sapiens</name>
    <name type="common">Human</name>
    <dbReference type="NCBI Taxonomy" id="9606"/>
    <lineage>
        <taxon>Eukaryota</taxon>
        <taxon>Metazoa</taxon>
        <taxon>Chordata</taxon>
        <taxon>Craniata</taxon>
        <taxon>Vertebrata</taxon>
        <taxon>Euteleostomi</taxon>
        <taxon>Mammalia</taxon>
        <taxon>Eutheria</taxon>
        <taxon>Euarchontoglires</taxon>
        <taxon>Primates</taxon>
        <taxon>Haplorrhini</taxon>
        <taxon>Catarrhini</taxon>
        <taxon>Hominidae</taxon>
        <taxon>Homo</taxon>
    </lineage>
</organism>
<sequence>MGEINQVAVEKYLEENPQFAKEYFDRKLRVEVLGEIFKNSQVPVQSSMSFSELTQVEESALCLELLWTVQEEGGTPEQGVHRALQRLAHLLQADRCSMFLCRSRNGIPEVASRLLDVTPTSKFEDNLVGPDKEVVFPLDIGIVGWAAHTKKTHNVPDVKKNSHFSDFMDKQTGYVTKNLLATPIVVGKEVLAVIMAVNKVNASEFSKQDEEVFSKYLNFVSIILRLHHTSYMYNIESRRSQILMWSANKVFEELTDVERQFHKALYTVRSYLNCERYSIGLLDMTKEKEFYDEWPIKLGEVEPYKGPKTPDGREVNFYKIIDYILHGKEEIKVIPTPPADHWTLISGLPTYVAENGFICNMMNAPADEYFTFQKGPVDETGWVIKNVLSLPIVNKKEDIVGVATFYNRKDGKPFDEHDEYITETLTQFLGWSLLNTDTYDKMNKLENRKDIAQEMLMNQTKATPEEIKSILKFQEKLNVDVIDDCEEKQLVAILKEDLPDPRSAELYEFRFSDFPLTEHGLIKCGIRLFFEINVVEKFKVPVEVLTRWMYTVRKGYRAVTYHNWRHGFNVGQTMFTLLMTGRLKKYYTDLEAFAMLAAAFCHDIDHRGTNNLYQMKSTSPLARLHGSSILERHHLEYSKTLLQDESLNIFQNLNKRQFETVIHLFEVAIIATDLALYFKKRTMFQKIVDACEQMQTEEEAIKYVTVDPTKKEIIMAMMMTACDLSAITKPWEVQSQVALMVANEFWEQGDLERTVLQQQPIPMMDRNKRDELPKLQVGFIDFVCTFVYKEFSRFHKEITPMLSGLQNNRVEWKSLADEYDAKMKVIEEEAKKQEGGAEKAAEDSGGGDDKKSKTCLML</sequence>
<name>PDE6C_HUMAN</name>
<feature type="chain" id="PRO_0000198831" description="Cone cGMP-specific 3',5'-cyclic phosphodiesterase subunit alpha'">
    <location>
        <begin position="1"/>
        <end position="855"/>
    </location>
</feature>
<feature type="propeptide" id="PRO_0000370788" description="Removed in mature form" evidence="2">
    <location>
        <begin position="856"/>
        <end position="858"/>
    </location>
</feature>
<feature type="domain" description="GAF 1">
    <location>
        <begin position="75"/>
        <end position="224"/>
    </location>
</feature>
<feature type="domain" description="GAF 2">
    <location>
        <begin position="256"/>
        <end position="433"/>
    </location>
</feature>
<feature type="domain" description="PDEase" evidence="3">
    <location>
        <begin position="486"/>
        <end position="819"/>
    </location>
</feature>
<feature type="region of interest" description="Disordered" evidence="4">
    <location>
        <begin position="830"/>
        <end position="858"/>
    </location>
</feature>
<feature type="compositionally biased region" description="Basic and acidic residues" evidence="4">
    <location>
        <begin position="830"/>
        <end position="852"/>
    </location>
</feature>
<feature type="active site" description="Proton donor" evidence="1">
    <location>
        <position position="562"/>
    </location>
</feature>
<feature type="binding site" evidence="1">
    <location>
        <position position="97"/>
    </location>
    <ligand>
        <name>3',5'-cyclic GMP</name>
        <dbReference type="ChEBI" id="CHEBI:57746"/>
    </ligand>
</feature>
<feature type="binding site" evidence="1">
    <location>
        <position position="116"/>
    </location>
    <ligand>
        <name>3',5'-cyclic GMP</name>
        <dbReference type="ChEBI" id="CHEBI:57746"/>
    </ligand>
</feature>
<feature type="binding site" evidence="1">
    <location>
        <begin position="169"/>
        <end position="172"/>
    </location>
    <ligand>
        <name>3',5'-cyclic GMP</name>
        <dbReference type="ChEBI" id="CHEBI:57746"/>
    </ligand>
</feature>
<feature type="binding site" evidence="1">
    <location>
        <position position="176"/>
    </location>
    <ligand>
        <name>3',5'-cyclic GMP</name>
        <dbReference type="ChEBI" id="CHEBI:57746"/>
    </ligand>
</feature>
<feature type="binding site" evidence="1">
    <location>
        <position position="566"/>
    </location>
    <ligand>
        <name>a divalent metal cation</name>
        <dbReference type="ChEBI" id="CHEBI:60240"/>
        <label>1</label>
    </ligand>
</feature>
<feature type="binding site" evidence="1">
    <location>
        <position position="602"/>
    </location>
    <ligand>
        <name>a divalent metal cation</name>
        <dbReference type="ChEBI" id="CHEBI:60240"/>
        <label>1</label>
    </ligand>
</feature>
<feature type="binding site" evidence="1">
    <location>
        <position position="603"/>
    </location>
    <ligand>
        <name>a divalent metal cation</name>
        <dbReference type="ChEBI" id="CHEBI:60240"/>
        <label>1</label>
    </ligand>
</feature>
<feature type="binding site" evidence="1">
    <location>
        <position position="603"/>
    </location>
    <ligand>
        <name>a divalent metal cation</name>
        <dbReference type="ChEBI" id="CHEBI:60240"/>
        <label>2</label>
    </ligand>
</feature>
<feature type="binding site" evidence="1">
    <location>
        <position position="723"/>
    </location>
    <ligand>
        <name>a divalent metal cation</name>
        <dbReference type="ChEBI" id="CHEBI:60240"/>
        <label>1</label>
    </ligand>
</feature>
<feature type="modified residue" description="Cysteine methyl ester" evidence="2">
    <location>
        <position position="855"/>
    </location>
</feature>
<feature type="lipid moiety-binding region" description="S-geranylgeranyl cysteine" evidence="1">
    <location>
        <position position="855"/>
    </location>
</feature>
<feature type="sequence variant" id="VAR_062408" description="In COD4 and ACHM5; severely decreases cGMP phosphodiesterase activity; dbSNP:rs121918537." evidence="6 7 9">
    <original>R</original>
    <variation>W</variation>
    <location>
        <position position="29"/>
    </location>
</feature>
<feature type="sequence variant" id="VAR_079307" description="In ACHM5; severely decreases cGMP phosphodiesterase activity; dbSNP:rs769506319." evidence="7 9">
    <original>R</original>
    <variation>W</variation>
    <location>
        <position position="104"/>
    </location>
</feature>
<feature type="sequence variant" id="VAR_025470" description="In dbSNP:rs76999928." evidence="5">
    <original>D</original>
    <variation>E</variation>
    <location>
        <position position="157"/>
    </location>
</feature>
<feature type="sequence variant" id="VAR_050475" description="In dbSNP:rs701865." evidence="10">
    <original>S</original>
    <variation>T</variation>
    <location>
        <position position="270"/>
    </location>
</feature>
<feature type="sequence variant" id="VAR_079308" description="In ACHM5." evidence="7">
    <location>
        <begin position="276"/>
        <end position="858"/>
    </location>
</feature>
<feature type="sequence variant" id="VAR_062409" description="In ACHM5; decreases cGMP phosphodiesterase activity; dbSNP:rs121918538." evidence="6 7 9">
    <original>Y</original>
    <variation>N</variation>
    <location>
        <position position="323"/>
    </location>
</feature>
<feature type="sequence variant" id="VAR_079309" description="In ACHM5; severely decreases cGMP phosphodiesterase activity." evidence="7 9">
    <original>P</original>
    <variation>L</variation>
    <location>
        <position position="391"/>
    </location>
</feature>
<feature type="sequence variant" id="VAR_062410" description="In ACHM5; decreases cGMP phosphodiesterase activity; dbSNP:rs121918539." evidence="6 9">
    <original>M</original>
    <variation>V</variation>
    <location>
        <position position="455"/>
    </location>
</feature>
<feature type="sequence variant" id="VAR_079310" description="In ACHM5; severely decreases cGMP phosphodiesterase activity; dbSNP:rs267606934." evidence="7 9">
    <original>H</original>
    <variation>L</variation>
    <location>
        <position position="602"/>
    </location>
</feature>
<feature type="sequence variant" id="VAR_050476" description="In dbSNP:rs12261131.">
    <original>E</original>
    <variation>A</variation>
    <location>
        <position position="699"/>
    </location>
</feature>
<feature type="sequence variant" id="VAR_079311" description="In ACHM5; decreases cGMP phosphodiesterase activity; dbSNP:rs267606936." evidence="7 9">
    <original>E</original>
    <variation>K</variation>
    <location>
        <position position="790"/>
    </location>
</feature>
<feature type="sequence variant" id="VAR_079312" description="In ACHM5." evidence="7">
    <location>
        <begin position="819"/>
        <end position="858"/>
    </location>
</feature>
<feature type="sequence variant" id="VAR_025471" description="In dbSNP:rs79487435." evidence="5">
    <original>K</original>
    <variation>N</variation>
    <location>
        <position position="822"/>
    </location>
</feature>
<feature type="sequence variant" id="VAR_064744" description="Found in a renal cell carcinoma sample; somatic mutation." evidence="8">
    <original>I</original>
    <variation>S</variation>
    <location>
        <position position="826"/>
    </location>
</feature>
<feature type="sequence variant" id="VAR_025472" description="In dbSNP:rs148661165." evidence="5">
    <original>E</original>
    <variation>G</variation>
    <location>
        <position position="834"/>
    </location>
</feature>
<feature type="mutagenesis site" description="No effect on cGMP phosphodiesterase activity." evidence="9">
    <original>L</original>
    <variation>V</variation>
    <location>
        <position position="858"/>
    </location>
</feature>
<feature type="sequence conflict" description="In Ref. 1; AAA96392 and 2; AAA92886." evidence="11" ref="1 2">
    <original>D</original>
    <variation>V</variation>
    <location>
        <position position="116"/>
    </location>
</feature>
<feature type="sequence conflict" description="In Ref. 1; AAA96392." evidence="11" ref="1">
    <original>Q</original>
    <variation>P</variation>
    <location>
        <position position="373"/>
    </location>
</feature>
<feature type="sequence conflict" description="In Ref. 1; AAA96392." evidence="11" ref="1">
    <original>P</original>
    <variation>L</variation>
    <location>
        <position position="464"/>
    </location>
</feature>
<feature type="sequence conflict" description="In Ref. 1; AAA96392 and 2; AAA92886." evidence="11" ref="1 2">
    <original>R</original>
    <variation>Q</variation>
    <location>
        <position position="565"/>
    </location>
</feature>
<feature type="helix" evidence="14">
    <location>
        <begin position="23"/>
        <end position="41"/>
    </location>
</feature>
<feature type="turn" evidence="14">
    <location>
        <begin position="49"/>
        <end position="51"/>
    </location>
</feature>
<feature type="helix" evidence="13">
    <location>
        <begin position="56"/>
        <end position="69"/>
    </location>
</feature>
<feature type="strand" evidence="13">
    <location>
        <begin position="72"/>
        <end position="74"/>
    </location>
</feature>
<feature type="helix" evidence="13">
    <location>
        <begin position="76"/>
        <end position="91"/>
    </location>
</feature>
<feature type="strand" evidence="13">
    <location>
        <begin position="93"/>
        <end position="104"/>
    </location>
</feature>
<feature type="strand" evidence="13">
    <location>
        <begin position="107"/>
        <end position="117"/>
    </location>
</feature>
<feature type="helix" evidence="13">
    <location>
        <begin position="123"/>
        <end position="126"/>
    </location>
</feature>
<feature type="turn" evidence="13">
    <location>
        <begin position="130"/>
        <end position="132"/>
    </location>
</feature>
<feature type="strand" evidence="13">
    <location>
        <begin position="135"/>
        <end position="137"/>
    </location>
</feature>
<feature type="helix" evidence="13">
    <location>
        <begin position="142"/>
        <end position="149"/>
    </location>
</feature>
<feature type="strand" evidence="13">
    <location>
        <begin position="153"/>
        <end position="157"/>
    </location>
</feature>
<feature type="helix" evidence="13">
    <location>
        <begin position="158"/>
        <end position="160"/>
    </location>
</feature>
<feature type="helix" evidence="13">
    <location>
        <begin position="167"/>
        <end position="172"/>
    </location>
</feature>
<feature type="strand" evidence="13">
    <location>
        <begin position="179"/>
        <end position="186"/>
    </location>
</feature>
<feature type="strand" evidence="13">
    <location>
        <begin position="189"/>
        <end position="201"/>
    </location>
</feature>
<feature type="helix" evidence="13">
    <location>
        <begin position="207"/>
        <end position="250"/>
    </location>
</feature>
<feature type="helix" evidence="13">
    <location>
        <begin position="257"/>
        <end position="268"/>
    </location>
</feature>
<feature type="helix" evidence="13">
    <location>
        <begin position="269"/>
        <end position="271"/>
    </location>
</feature>
<feature type="strand" evidence="13">
    <location>
        <begin position="274"/>
        <end position="282"/>
    </location>
</feature>
<feature type="helix" evidence="13">
    <location>
        <begin position="290"/>
        <end position="297"/>
    </location>
</feature>
<feature type="strand" evidence="13">
    <location>
        <begin position="317"/>
        <end position="324"/>
    </location>
</feature>
<feature type="strand" evidence="13">
    <location>
        <begin position="326"/>
        <end position="328"/>
    </location>
</feature>
<feature type="strand" evidence="13">
    <location>
        <begin position="330"/>
        <end position="336"/>
    </location>
</feature>
<feature type="turn" evidence="13">
    <location>
        <begin position="342"/>
        <end position="344"/>
    </location>
</feature>
<feature type="strand" evidence="13">
    <location>
        <begin position="345"/>
        <end position="347"/>
    </location>
</feature>
<feature type="helix" evidence="13">
    <location>
        <begin position="348"/>
        <end position="355"/>
    </location>
</feature>
<feature type="strand" evidence="13">
    <location>
        <begin position="357"/>
        <end position="362"/>
    </location>
</feature>
<feature type="helix" evidence="13">
    <location>
        <begin position="364"/>
        <end position="366"/>
    </location>
</feature>
<feature type="strand" evidence="13">
    <location>
        <begin position="368"/>
        <end position="370"/>
    </location>
</feature>
<feature type="strand" evidence="13">
    <location>
        <begin position="377"/>
        <end position="380"/>
    </location>
</feature>
<feature type="strand" evidence="13">
    <location>
        <begin position="386"/>
        <end position="393"/>
    </location>
</feature>
<feature type="strand" evidence="13">
    <location>
        <begin position="399"/>
        <end position="406"/>
    </location>
</feature>
<feature type="strand" evidence="15">
    <location>
        <begin position="407"/>
        <end position="410"/>
    </location>
</feature>
<feature type="helix" evidence="13">
    <location>
        <begin position="416"/>
        <end position="431"/>
    </location>
</feature>
<feature type="helix" evidence="13">
    <location>
        <begin position="433"/>
        <end position="460"/>
    </location>
</feature>
<feature type="helix" evidence="13">
    <location>
        <begin position="464"/>
        <end position="470"/>
    </location>
</feature>
<feature type="helix" evidence="13">
    <location>
        <begin position="474"/>
        <end position="477"/>
    </location>
</feature>
<feature type="helix" evidence="13">
    <location>
        <begin position="487"/>
        <end position="497"/>
    </location>
</feature>
<feature type="turn" evidence="13">
    <location>
        <begin position="501"/>
        <end position="507"/>
    </location>
</feature>
<feature type="strand" evidence="13">
    <location>
        <begin position="513"/>
        <end position="516"/>
    </location>
</feature>
<feature type="helix" evidence="13">
    <location>
        <begin position="518"/>
        <end position="531"/>
    </location>
</feature>
<feature type="helix" evidence="13">
    <location>
        <begin position="535"/>
        <end position="538"/>
    </location>
</feature>
<feature type="helix" evidence="13">
    <location>
        <begin position="542"/>
        <end position="555"/>
    </location>
</feature>
<feature type="strand" evidence="13">
    <location>
        <begin position="560"/>
        <end position="563"/>
    </location>
</feature>
<feature type="helix" evidence="13">
    <location>
        <begin position="564"/>
        <end position="579"/>
    </location>
</feature>
<feature type="helix" evidence="13">
    <location>
        <begin position="583"/>
        <end position="586"/>
    </location>
</feature>
<feature type="helix" evidence="13">
    <location>
        <begin position="589"/>
        <end position="601"/>
    </location>
</feature>
<feature type="turn" evidence="13">
    <location>
        <begin position="602"/>
        <end position="605"/>
    </location>
</feature>
<feature type="helix" evidence="13">
    <location>
        <begin position="611"/>
        <end position="616"/>
    </location>
</feature>
<feature type="helix" evidence="13">
    <location>
        <begin position="620"/>
        <end position="624"/>
    </location>
</feature>
<feature type="strand" evidence="13">
    <location>
        <begin position="626"/>
        <end position="628"/>
    </location>
</feature>
<feature type="helix" evidence="13">
    <location>
        <begin position="629"/>
        <end position="643"/>
    </location>
</feature>
<feature type="turn" evidence="13">
    <location>
        <begin position="645"/>
        <end position="647"/>
    </location>
</feature>
<feature type="turn" evidence="13">
    <location>
        <begin position="649"/>
        <end position="652"/>
    </location>
</feature>
<feature type="helix" evidence="13">
    <location>
        <begin position="655"/>
        <end position="670"/>
    </location>
</feature>
<feature type="helix" evidence="13">
    <location>
        <begin position="674"/>
        <end position="692"/>
    </location>
</feature>
<feature type="helix" evidence="13">
    <location>
        <begin position="697"/>
        <end position="705"/>
    </location>
</feature>
<feature type="helix" evidence="13">
    <location>
        <begin position="708"/>
        <end position="723"/>
    </location>
</feature>
<feature type="helix" evidence="13">
    <location>
        <begin position="725"/>
        <end position="728"/>
    </location>
</feature>
<feature type="helix" evidence="12">
    <location>
        <begin position="746"/>
        <end position="754"/>
    </location>
</feature>
<feature type="helix" evidence="12">
    <location>
        <begin position="762"/>
        <end position="764"/>
    </location>
</feature>
<feature type="helix" evidence="12">
    <location>
        <begin position="766"/>
        <end position="771"/>
    </location>
</feature>
<feature type="helix" evidence="12">
    <location>
        <begin position="772"/>
        <end position="782"/>
    </location>
</feature>
<feature type="helix" evidence="13">
    <location>
        <begin position="784"/>
        <end position="794"/>
    </location>
</feature>
<feature type="helix" evidence="13">
    <location>
        <begin position="796"/>
        <end position="798"/>
    </location>
</feature>
<feature type="helix" evidence="13">
    <location>
        <begin position="799"/>
        <end position="824"/>
    </location>
</feature>
<reference key="1">
    <citation type="journal article" date="1995" name="Gene">
        <title>Isolation and characterization of a cDNA encoding the alpha' subunit of human cone cGMP-phosphodiesterase.</title>
        <authorList>
            <person name="Viczian A.S."/>
            <person name="Piriev N.I."/>
            <person name="Farber D.B."/>
        </authorList>
    </citation>
    <scope>NUCLEOTIDE SEQUENCE [MRNA]</scope>
    <source>
        <tissue>Retina</tissue>
    </source>
</reference>
<reference key="2">
    <citation type="journal article" date="1995" name="Genomics">
        <title>Gene structure and amino acid sequence of the human cone photoreceptor cGMP-phosphodiesterase alpha' subunit (PDEA2) and its chromosomal localization to 10q24.</title>
        <authorList>
            <person name="Piriev N.I."/>
            <person name="Viczian A.S."/>
            <person name="Ye J."/>
            <person name="Kerner B."/>
            <person name="Korenberg J.R."/>
            <person name="Farber D.B."/>
        </authorList>
    </citation>
    <scope>NUCLEOTIDE SEQUENCE [GENOMIC DNA]</scope>
    <source>
        <tissue>Retina</tissue>
    </source>
</reference>
<reference key="3">
    <citation type="journal article" date="1996" name="FEBS Lett.">
        <title>Human cone-specific cGMP phosphodiesterase alpha' subunit: complete cDNA sequence and gene arrangement.</title>
        <authorList>
            <person name="Feshchenko E.A."/>
            <person name="Andreeva S.G."/>
            <person name="Suslova V.A."/>
            <person name="Smirnova E.V."/>
            <person name="Zagranichny V.E."/>
            <person name="Lipkin V.M."/>
        </authorList>
    </citation>
    <scope>NUCLEOTIDE SEQUENCE [GENOMIC DNA / MRNA]</scope>
    <scope>VARIANT THR-270</scope>
    <source>
        <tissue>Retina</tissue>
    </source>
</reference>
<reference key="4">
    <citation type="journal article" date="2004" name="Nature">
        <title>The DNA sequence and comparative analysis of human chromosome 10.</title>
        <authorList>
            <person name="Deloukas P."/>
            <person name="Earthrowl M.E."/>
            <person name="Grafham D.V."/>
            <person name="Rubenfield M."/>
            <person name="French L."/>
            <person name="Steward C.A."/>
            <person name="Sims S.K."/>
            <person name="Jones M.C."/>
            <person name="Searle S."/>
            <person name="Scott C."/>
            <person name="Howe K."/>
            <person name="Hunt S.E."/>
            <person name="Andrews T.D."/>
            <person name="Gilbert J.G.R."/>
            <person name="Swarbreck D."/>
            <person name="Ashurst J.L."/>
            <person name="Taylor A."/>
            <person name="Battles J."/>
            <person name="Bird C.P."/>
            <person name="Ainscough R."/>
            <person name="Almeida J.P."/>
            <person name="Ashwell R.I.S."/>
            <person name="Ambrose K.D."/>
            <person name="Babbage A.K."/>
            <person name="Bagguley C.L."/>
            <person name="Bailey J."/>
            <person name="Banerjee R."/>
            <person name="Bates K."/>
            <person name="Beasley H."/>
            <person name="Bray-Allen S."/>
            <person name="Brown A.J."/>
            <person name="Brown J.Y."/>
            <person name="Burford D.C."/>
            <person name="Burrill W."/>
            <person name="Burton J."/>
            <person name="Cahill P."/>
            <person name="Camire D."/>
            <person name="Carter N.P."/>
            <person name="Chapman J.C."/>
            <person name="Clark S.Y."/>
            <person name="Clarke G."/>
            <person name="Clee C.M."/>
            <person name="Clegg S."/>
            <person name="Corby N."/>
            <person name="Coulson A."/>
            <person name="Dhami P."/>
            <person name="Dutta I."/>
            <person name="Dunn M."/>
            <person name="Faulkner L."/>
            <person name="Frankish A."/>
            <person name="Frankland J.A."/>
            <person name="Garner P."/>
            <person name="Garnett J."/>
            <person name="Gribble S."/>
            <person name="Griffiths C."/>
            <person name="Grocock R."/>
            <person name="Gustafson E."/>
            <person name="Hammond S."/>
            <person name="Harley J.L."/>
            <person name="Hart E."/>
            <person name="Heath P.D."/>
            <person name="Ho T.P."/>
            <person name="Hopkins B."/>
            <person name="Horne J."/>
            <person name="Howden P.J."/>
            <person name="Huckle E."/>
            <person name="Hynds C."/>
            <person name="Johnson C."/>
            <person name="Johnson D."/>
            <person name="Kana A."/>
            <person name="Kay M."/>
            <person name="Kimberley A.M."/>
            <person name="Kershaw J.K."/>
            <person name="Kokkinaki M."/>
            <person name="Laird G.K."/>
            <person name="Lawlor S."/>
            <person name="Lee H.M."/>
            <person name="Leongamornlert D.A."/>
            <person name="Laird G."/>
            <person name="Lloyd C."/>
            <person name="Lloyd D.M."/>
            <person name="Loveland J."/>
            <person name="Lovell J."/>
            <person name="McLaren S."/>
            <person name="McLay K.E."/>
            <person name="McMurray A."/>
            <person name="Mashreghi-Mohammadi M."/>
            <person name="Matthews L."/>
            <person name="Milne S."/>
            <person name="Nickerson T."/>
            <person name="Nguyen M."/>
            <person name="Overton-Larty E."/>
            <person name="Palmer S.A."/>
            <person name="Pearce A.V."/>
            <person name="Peck A.I."/>
            <person name="Pelan S."/>
            <person name="Phillimore B."/>
            <person name="Porter K."/>
            <person name="Rice C.M."/>
            <person name="Rogosin A."/>
            <person name="Ross M.T."/>
            <person name="Sarafidou T."/>
            <person name="Sehra H.K."/>
            <person name="Shownkeen R."/>
            <person name="Skuce C.D."/>
            <person name="Smith M."/>
            <person name="Standring L."/>
            <person name="Sycamore N."/>
            <person name="Tester J."/>
            <person name="Thorpe A."/>
            <person name="Torcasso W."/>
            <person name="Tracey A."/>
            <person name="Tromans A."/>
            <person name="Tsolas J."/>
            <person name="Wall M."/>
            <person name="Walsh J."/>
            <person name="Wang H."/>
            <person name="Weinstock K."/>
            <person name="West A.P."/>
            <person name="Willey D.L."/>
            <person name="Whitehead S.L."/>
            <person name="Wilming L."/>
            <person name="Wray P.W."/>
            <person name="Young L."/>
            <person name="Chen Y."/>
            <person name="Lovering R.C."/>
            <person name="Moschonas N.K."/>
            <person name="Siebert R."/>
            <person name="Fechtel K."/>
            <person name="Bentley D."/>
            <person name="Durbin R.M."/>
            <person name="Hubbard T."/>
            <person name="Doucette-Stamm L."/>
            <person name="Beck S."/>
            <person name="Smith D.R."/>
            <person name="Rogers J."/>
        </authorList>
    </citation>
    <scope>NUCLEOTIDE SEQUENCE [LARGE SCALE GENOMIC DNA]</scope>
</reference>
<reference key="5">
    <citation type="submission" date="2005-09" db="EMBL/GenBank/DDBJ databases">
        <authorList>
            <person name="Mural R.J."/>
            <person name="Istrail S."/>
            <person name="Sutton G.G."/>
            <person name="Florea L."/>
            <person name="Halpern A.L."/>
            <person name="Mobarry C.M."/>
            <person name="Lippert R."/>
            <person name="Walenz B."/>
            <person name="Shatkay H."/>
            <person name="Dew I."/>
            <person name="Miller J.R."/>
            <person name="Flanigan M.J."/>
            <person name="Edwards N.J."/>
            <person name="Bolanos R."/>
            <person name="Fasulo D."/>
            <person name="Halldorsson B.V."/>
            <person name="Hannenhalli S."/>
            <person name="Turner R."/>
            <person name="Yooseph S."/>
            <person name="Lu F."/>
            <person name="Nusskern D.R."/>
            <person name="Shue B.C."/>
            <person name="Zheng X.H."/>
            <person name="Zhong F."/>
            <person name="Delcher A.L."/>
            <person name="Huson D.H."/>
            <person name="Kravitz S.A."/>
            <person name="Mouchard L."/>
            <person name="Reinert K."/>
            <person name="Remington K.A."/>
            <person name="Clark A.G."/>
            <person name="Waterman M.S."/>
            <person name="Eichler E.E."/>
            <person name="Adams M.D."/>
            <person name="Hunkapiller M.W."/>
            <person name="Myers E.W."/>
            <person name="Venter J.C."/>
        </authorList>
    </citation>
    <scope>NUCLEOTIDE SEQUENCE [LARGE SCALE GENOMIC DNA]</scope>
</reference>
<reference key="6">
    <citation type="journal article" date="2011" name="Hum. Mol. Genet.">
        <title>Decreased catalytic activity and altered activation properties of PDE6C mutants associated with autosomal recessive achromatopsia.</title>
        <authorList>
            <person name="Grau T."/>
            <person name="Artemyev N.O."/>
            <person name="Rosenberg T."/>
            <person name="Dollfus H."/>
            <person name="Haugen O.H."/>
            <person name="Cumhur Sener E."/>
            <person name="Jurklies B."/>
            <person name="Andreasson S."/>
            <person name="Kernstock C."/>
            <person name="Larsen M."/>
            <person name="Zrenner E."/>
            <person name="Wissinger B."/>
            <person name="Kohl S."/>
        </authorList>
    </citation>
    <scope>FUNCTION</scope>
    <scope>INVOLVEMENT IN ACHM5</scope>
    <scope>VARIANTS ACHM5 TRP-29; TRP-104; 276-ARG--LEU-858 DEL; ASN-323; LEU-391; LEU-602; LYS-790 AND 819-TYR--LEU-858 DEL</scope>
    <scope>CHARACTERIZATION OF VARIANTS ACHM5 TRP-29; TRP-104; ASN-323; LEU-391; LEU-602 AND LYS-790</scope>
</reference>
<reference key="7">
    <citation type="journal article" date="2017" name="Cell. Signal.">
        <title>Mechanisms of mutant PDE6 proteins underlying retinal diseases.</title>
        <authorList>
            <person name="Gopalakrishna K.N."/>
            <person name="Boyd K."/>
            <person name="Artemyev N.O."/>
        </authorList>
    </citation>
    <scope>FUNCTION</scope>
    <scope>CHARACTERIZATION OF VARIANTS ACHM5 TRP-29; TRP-104; ASN-323; LEU-391; VAL-455; LEU-602 AND LYS-790</scope>
    <scope>MUTAGENESIS OF LEU-858</scope>
</reference>
<reference key="8">
    <citation type="journal article" date="1999" name="Invest. Ophthalmol. Vis. Sci.">
        <title>Screening of the gene encoding the alpha'-subunit of cone cGMP-PDE in patients with retinal degenerations.</title>
        <authorList>
            <person name="Gao Y.Q."/>
            <person name="Danciger M."/>
            <person name="Longmuir R."/>
            <person name="Piriev N.I."/>
            <person name="Zhao D.Y."/>
            <person name="Heckenlively J.R."/>
            <person name="Fishman G.A."/>
            <person name="Weleber R.G."/>
            <person name="Jacobson S.G."/>
            <person name="Stone E.M."/>
            <person name="Farber D.B."/>
        </authorList>
    </citation>
    <scope>VARIANTS GLU-157; ASN-822 AND GLY-834</scope>
</reference>
<reference key="9">
    <citation type="journal article" date="2009" name="Am. J. Hum. Genet.">
        <title>Homozygosity mapping reveals PDE6C mutations in patients with early-onset cone photoreceptor disorders.</title>
        <authorList>
            <person name="Thiadens A.A."/>
            <person name="den Hollander A.I."/>
            <person name="Roosing S."/>
            <person name="Nabuurs S.B."/>
            <person name="Zekveld-Vroon R.C."/>
            <person name="Collin R.W."/>
            <person name="De Baere E."/>
            <person name="Koenekoop R.K."/>
            <person name="van Schooneveld M.J."/>
            <person name="Strom T.M."/>
            <person name="van Lith-Verhoeven J.J."/>
            <person name="Lotery A.J."/>
            <person name="van Moll-Ramirez N."/>
            <person name="Leroy B.P."/>
            <person name="van den Born L.I."/>
            <person name="Hoyng C.B."/>
            <person name="Cremers F.P."/>
            <person name="Klaver C.C."/>
        </authorList>
    </citation>
    <scope>INVOLVEMENT IN COD4</scope>
    <scope>INVOLVEMENT IN ACHM5</scope>
    <scope>VARIANT COD4 TRP-29</scope>
    <scope>VARIANTS ACHM5 ASN-323 AND VAL-455</scope>
</reference>
<reference key="10">
    <citation type="journal article" date="2011" name="Nature">
        <title>Exome sequencing identifies frequent mutation of the SWI/SNF complex gene PBRM1 in renal carcinoma.</title>
        <authorList>
            <person name="Varela I."/>
            <person name="Tarpey P."/>
            <person name="Raine K."/>
            <person name="Huang D."/>
            <person name="Ong C.K."/>
            <person name="Stephens P."/>
            <person name="Davies H."/>
            <person name="Jones D."/>
            <person name="Lin M.L."/>
            <person name="Teague J."/>
            <person name="Bignell G."/>
            <person name="Butler A."/>
            <person name="Cho J."/>
            <person name="Dalgliesh G.L."/>
            <person name="Galappaththige D."/>
            <person name="Greenman C."/>
            <person name="Hardy C."/>
            <person name="Jia M."/>
            <person name="Latimer C."/>
            <person name="Lau K.W."/>
            <person name="Marshall J."/>
            <person name="McLaren S."/>
            <person name="Menzies A."/>
            <person name="Mudie L."/>
            <person name="Stebbings L."/>
            <person name="Largaespada D.A."/>
            <person name="Wessels L.F.A."/>
            <person name="Richard S."/>
            <person name="Kahnoski R.J."/>
            <person name="Anema J."/>
            <person name="Tuveson D.A."/>
            <person name="Perez-Mancera P.A."/>
            <person name="Mustonen V."/>
            <person name="Fischer A."/>
            <person name="Adams D.J."/>
            <person name="Rust A."/>
            <person name="Chan-On W."/>
            <person name="Subimerb C."/>
            <person name="Dykema K."/>
            <person name="Furge K."/>
            <person name="Campbell P.J."/>
            <person name="Teh B.T."/>
            <person name="Stratton M.R."/>
            <person name="Futreal P.A."/>
        </authorList>
    </citation>
    <scope>VARIANT SER-826</scope>
</reference>
<keyword id="KW-0002">3D-structure</keyword>
<keyword id="KW-1003">Cell membrane</keyword>
<keyword id="KW-0140">cGMP</keyword>
<keyword id="KW-0142">cGMP-binding</keyword>
<keyword id="KW-0225">Disease variant</keyword>
<keyword id="KW-0378">Hydrolase</keyword>
<keyword id="KW-0449">Lipoprotein</keyword>
<keyword id="KW-0472">Membrane</keyword>
<keyword id="KW-0479">Metal-binding</keyword>
<keyword id="KW-0488">Methylation</keyword>
<keyword id="KW-0547">Nucleotide-binding</keyword>
<keyword id="KW-0636">Prenylation</keyword>
<keyword id="KW-1267">Proteomics identification</keyword>
<keyword id="KW-1185">Reference proteome</keyword>
<keyword id="KW-0677">Repeat</keyword>
<keyword id="KW-0716">Sensory transduction</keyword>
<keyword id="KW-0844">Vision</keyword>
<dbReference type="EC" id="3.1.4.35" evidence="7 9"/>
<dbReference type="EMBL" id="U31973">
    <property type="protein sequence ID" value="AAA96392.1"/>
    <property type="molecule type" value="mRNA"/>
</dbReference>
<dbReference type="EMBL" id="U20212">
    <property type="protein sequence ID" value="AAA92886.1"/>
    <property type="molecule type" value="Genomic_DNA"/>
</dbReference>
<dbReference type="EMBL" id="U20196">
    <property type="protein sequence ID" value="AAA92886.1"/>
    <property type="status" value="JOINED"/>
    <property type="molecule type" value="Genomic_DNA"/>
</dbReference>
<dbReference type="EMBL" id="U20197">
    <property type="protein sequence ID" value="AAA92886.1"/>
    <property type="status" value="JOINED"/>
    <property type="molecule type" value="Genomic_DNA"/>
</dbReference>
<dbReference type="EMBL" id="U20199">
    <property type="protein sequence ID" value="AAA92886.1"/>
    <property type="status" value="JOINED"/>
    <property type="molecule type" value="Genomic_DNA"/>
</dbReference>
<dbReference type="EMBL" id="U20200">
    <property type="protein sequence ID" value="AAA92886.1"/>
    <property type="status" value="JOINED"/>
    <property type="molecule type" value="Genomic_DNA"/>
</dbReference>
<dbReference type="EMBL" id="U20201">
    <property type="protein sequence ID" value="AAA92886.1"/>
    <property type="status" value="JOINED"/>
    <property type="molecule type" value="Genomic_DNA"/>
</dbReference>
<dbReference type="EMBL" id="U20202">
    <property type="protein sequence ID" value="AAA92886.1"/>
    <property type="status" value="JOINED"/>
    <property type="molecule type" value="Genomic_DNA"/>
</dbReference>
<dbReference type="EMBL" id="U20203">
    <property type="protein sequence ID" value="AAA92886.1"/>
    <property type="status" value="JOINED"/>
    <property type="molecule type" value="Genomic_DNA"/>
</dbReference>
<dbReference type="EMBL" id="U20204">
    <property type="protein sequence ID" value="AAA92886.1"/>
    <property type="status" value="JOINED"/>
    <property type="molecule type" value="Genomic_DNA"/>
</dbReference>
<dbReference type="EMBL" id="U20205">
    <property type="protein sequence ID" value="AAA92886.1"/>
    <property type="status" value="JOINED"/>
    <property type="molecule type" value="Genomic_DNA"/>
</dbReference>
<dbReference type="EMBL" id="U20206">
    <property type="protein sequence ID" value="AAA92886.1"/>
    <property type="status" value="JOINED"/>
    <property type="molecule type" value="Genomic_DNA"/>
</dbReference>
<dbReference type="EMBL" id="U20207">
    <property type="protein sequence ID" value="AAA92886.1"/>
    <property type="status" value="JOINED"/>
    <property type="molecule type" value="Genomic_DNA"/>
</dbReference>
<dbReference type="EMBL" id="U20208">
    <property type="protein sequence ID" value="AAA92886.1"/>
    <property type="status" value="JOINED"/>
    <property type="molecule type" value="Genomic_DNA"/>
</dbReference>
<dbReference type="EMBL" id="U20209">
    <property type="protein sequence ID" value="AAA92886.1"/>
    <property type="status" value="JOINED"/>
    <property type="molecule type" value="Genomic_DNA"/>
</dbReference>
<dbReference type="EMBL" id="U20210">
    <property type="protein sequence ID" value="AAA92886.1"/>
    <property type="status" value="JOINED"/>
    <property type="molecule type" value="Genomic_DNA"/>
</dbReference>
<dbReference type="EMBL" id="U20211">
    <property type="protein sequence ID" value="AAA92886.1"/>
    <property type="status" value="JOINED"/>
    <property type="molecule type" value="Genomic_DNA"/>
</dbReference>
<dbReference type="EMBL" id="X94354">
    <property type="protein sequence ID" value="CAA64079.1"/>
    <property type="molecule type" value="Genomic_DNA"/>
</dbReference>
<dbReference type="EMBL" id="AL356214">
    <property type="status" value="NOT_ANNOTATED_CDS"/>
    <property type="molecule type" value="Genomic_DNA"/>
</dbReference>
<dbReference type="EMBL" id="AL157396">
    <property type="status" value="NOT_ANNOTATED_CDS"/>
    <property type="molecule type" value="Genomic_DNA"/>
</dbReference>
<dbReference type="EMBL" id="CH471066">
    <property type="protein sequence ID" value="EAW50064.1"/>
    <property type="molecule type" value="Genomic_DNA"/>
</dbReference>
<dbReference type="CCDS" id="CCDS7429.1"/>
<dbReference type="PIR" id="S63688">
    <property type="entry name" value="JC4520"/>
</dbReference>
<dbReference type="RefSeq" id="NP_006195.3">
    <property type="nucleotide sequence ID" value="NM_006204.3"/>
</dbReference>
<dbReference type="PDB" id="3JWQ">
    <property type="method" value="X-ray"/>
    <property type="resolution" value="2.87 A"/>
    <property type="chains" value="A/B/C/D=746-785"/>
</dbReference>
<dbReference type="PDB" id="3JWR">
    <property type="method" value="X-ray"/>
    <property type="resolution" value="2.99 A"/>
    <property type="chains" value="A/B=746-785"/>
</dbReference>
<dbReference type="PDB" id="5E8F">
    <property type="method" value="X-ray"/>
    <property type="resolution" value="2.10 A"/>
    <property type="chains" value="D/E=851-855"/>
</dbReference>
<dbReference type="PDB" id="9CXG">
    <property type="method" value="EM"/>
    <property type="resolution" value="3.00 A"/>
    <property type="chains" value="A/B=2-830"/>
</dbReference>
<dbReference type="PDB" id="9CXH">
    <property type="method" value="EM"/>
    <property type="resolution" value="3.10 A"/>
    <property type="chains" value="A/B=2-830"/>
</dbReference>
<dbReference type="PDB" id="9CXI">
    <property type="method" value="EM"/>
    <property type="resolution" value="3.00 A"/>
    <property type="chains" value="A/B=2-830"/>
</dbReference>
<dbReference type="PDB" id="9CXJ">
    <property type="method" value="EM"/>
    <property type="resolution" value="3.10 A"/>
    <property type="chains" value="A/B=2-830"/>
</dbReference>
<dbReference type="PDBsum" id="3JWQ"/>
<dbReference type="PDBsum" id="3JWR"/>
<dbReference type="PDBsum" id="5E8F"/>
<dbReference type="PDBsum" id="9CXG"/>
<dbReference type="PDBsum" id="9CXH"/>
<dbReference type="PDBsum" id="9CXI"/>
<dbReference type="PDBsum" id="9CXJ"/>
<dbReference type="EMDB" id="EMD-45989"/>
<dbReference type="EMDB" id="EMD-45990"/>
<dbReference type="EMDB" id="EMD-45991"/>
<dbReference type="EMDB" id="EMD-45992"/>
<dbReference type="EMDB" id="EMD-45993"/>
<dbReference type="SMR" id="P51160"/>
<dbReference type="BioGRID" id="111172">
    <property type="interactions" value="8"/>
</dbReference>
<dbReference type="CORUM" id="P51160"/>
<dbReference type="FunCoup" id="P51160">
    <property type="interactions" value="126"/>
</dbReference>
<dbReference type="STRING" id="9606.ENSP00000360502"/>
<dbReference type="BindingDB" id="P51160"/>
<dbReference type="ChEMBL" id="CHEMBL3977"/>
<dbReference type="DrugBank" id="DB00201">
    <property type="generic name" value="Caffeine"/>
</dbReference>
<dbReference type="DrugBank" id="DB09283">
    <property type="generic name" value="Trapidil"/>
</dbReference>
<dbReference type="DrugCentral" id="P51160"/>
<dbReference type="GuidetoPHARMACOLOGY" id="1314"/>
<dbReference type="GlyGen" id="P51160">
    <property type="glycosylation" value="2 sites"/>
</dbReference>
<dbReference type="iPTMnet" id="P51160"/>
<dbReference type="PhosphoSitePlus" id="P51160"/>
<dbReference type="BioMuta" id="PDE6C"/>
<dbReference type="DMDM" id="90111861"/>
<dbReference type="jPOST" id="P51160"/>
<dbReference type="MassIVE" id="P51160"/>
<dbReference type="PaxDb" id="9606-ENSP00000360502"/>
<dbReference type="PeptideAtlas" id="P51160"/>
<dbReference type="ProteomicsDB" id="56291"/>
<dbReference type="Pumba" id="P51160"/>
<dbReference type="Antibodypedia" id="30485">
    <property type="antibodies" value="128 antibodies from 22 providers"/>
</dbReference>
<dbReference type="DNASU" id="5146"/>
<dbReference type="Ensembl" id="ENST00000371447.4">
    <property type="protein sequence ID" value="ENSP00000360502.3"/>
    <property type="gene ID" value="ENSG00000095464.10"/>
</dbReference>
<dbReference type="GeneID" id="5146"/>
<dbReference type="KEGG" id="hsa:5146"/>
<dbReference type="MANE-Select" id="ENST00000371447.4">
    <property type="protein sequence ID" value="ENSP00000360502.3"/>
    <property type="RefSeq nucleotide sequence ID" value="NM_006204.4"/>
    <property type="RefSeq protein sequence ID" value="NP_006195.3"/>
</dbReference>
<dbReference type="UCSC" id="uc001kiu.5">
    <property type="organism name" value="human"/>
</dbReference>
<dbReference type="AGR" id="HGNC:8787"/>
<dbReference type="CTD" id="5146"/>
<dbReference type="DisGeNET" id="5146"/>
<dbReference type="GeneCards" id="PDE6C"/>
<dbReference type="GeneReviews" id="PDE6C"/>
<dbReference type="HGNC" id="HGNC:8787">
    <property type="gene designation" value="PDE6C"/>
</dbReference>
<dbReference type="HPA" id="ENSG00000095464">
    <property type="expression patterns" value="Tissue enriched (retina)"/>
</dbReference>
<dbReference type="MalaCards" id="PDE6C"/>
<dbReference type="MIM" id="600827">
    <property type="type" value="gene"/>
</dbReference>
<dbReference type="MIM" id="613093">
    <property type="type" value="phenotype"/>
</dbReference>
<dbReference type="neXtProt" id="NX_P51160"/>
<dbReference type="OpenTargets" id="ENSG00000095464"/>
<dbReference type="Orphanet" id="49382">
    <property type="disease" value="Achromatopsia"/>
</dbReference>
<dbReference type="Orphanet" id="1871">
    <property type="disease" value="Progressive cone dystrophy"/>
</dbReference>
<dbReference type="PharmGKB" id="PA33135"/>
<dbReference type="VEuPathDB" id="HostDB:ENSG00000095464"/>
<dbReference type="eggNOG" id="KOG3689">
    <property type="taxonomic scope" value="Eukaryota"/>
</dbReference>
<dbReference type="GeneTree" id="ENSGT00940000157825"/>
<dbReference type="HOGENOM" id="CLU_006980_2_0_1"/>
<dbReference type="InParanoid" id="P51160"/>
<dbReference type="OMA" id="LICNMMN"/>
<dbReference type="OrthoDB" id="546632at2759"/>
<dbReference type="PAN-GO" id="P51160">
    <property type="GO annotations" value="3 GO annotations based on evolutionary models"/>
</dbReference>
<dbReference type="PhylomeDB" id="P51160"/>
<dbReference type="TreeFam" id="TF316499"/>
<dbReference type="PathwayCommons" id="P51160"/>
<dbReference type="BioGRID-ORCS" id="5146">
    <property type="hits" value="5 hits in 1138 CRISPR screens"/>
</dbReference>
<dbReference type="ChiTaRS" id="PDE6C">
    <property type="organism name" value="human"/>
</dbReference>
<dbReference type="EvolutionaryTrace" id="P51160"/>
<dbReference type="GeneWiki" id="PDE6C"/>
<dbReference type="GenomeRNAi" id="5146"/>
<dbReference type="Pharos" id="P51160">
    <property type="development level" value="Tclin"/>
</dbReference>
<dbReference type="PRO" id="PR:P51160"/>
<dbReference type="Proteomes" id="UP000005640">
    <property type="component" value="Chromosome 10"/>
</dbReference>
<dbReference type="RNAct" id="P51160">
    <property type="molecule type" value="protein"/>
</dbReference>
<dbReference type="Bgee" id="ENSG00000095464">
    <property type="expression patterns" value="Expressed in secondary oocyte and 95 other cell types or tissues"/>
</dbReference>
<dbReference type="GO" id="GO:0005886">
    <property type="term" value="C:plasma membrane"/>
    <property type="evidence" value="ECO:0007669"/>
    <property type="project" value="UniProtKB-SubCell"/>
</dbReference>
<dbReference type="GO" id="GO:0004115">
    <property type="term" value="F:3',5'-cyclic-AMP phosphodiesterase activity"/>
    <property type="evidence" value="ECO:0000318"/>
    <property type="project" value="GO_Central"/>
</dbReference>
<dbReference type="GO" id="GO:0047555">
    <property type="term" value="F:3',5'-cyclic-GMP phosphodiesterase activity"/>
    <property type="evidence" value="ECO:0000318"/>
    <property type="project" value="GO_Central"/>
</dbReference>
<dbReference type="GO" id="GO:0030553">
    <property type="term" value="F:cGMP binding"/>
    <property type="evidence" value="ECO:0007669"/>
    <property type="project" value="UniProtKB-KW"/>
</dbReference>
<dbReference type="GO" id="GO:0046872">
    <property type="term" value="F:metal ion binding"/>
    <property type="evidence" value="ECO:0007669"/>
    <property type="project" value="UniProtKB-KW"/>
</dbReference>
<dbReference type="GO" id="GO:0019933">
    <property type="term" value="P:cAMP-mediated signaling"/>
    <property type="evidence" value="ECO:0000318"/>
    <property type="project" value="GO_Central"/>
</dbReference>
<dbReference type="GO" id="GO:0007603">
    <property type="term" value="P:phototransduction, visible light"/>
    <property type="evidence" value="ECO:0007669"/>
    <property type="project" value="Ensembl"/>
</dbReference>
<dbReference type="GO" id="GO:0046549">
    <property type="term" value="P:retinal cone cell development"/>
    <property type="evidence" value="ECO:0007669"/>
    <property type="project" value="Ensembl"/>
</dbReference>
<dbReference type="GO" id="GO:0007601">
    <property type="term" value="P:visual perception"/>
    <property type="evidence" value="ECO:0000318"/>
    <property type="project" value="GO_Central"/>
</dbReference>
<dbReference type="CDD" id="cd00077">
    <property type="entry name" value="HDc"/>
    <property type="match status" value="1"/>
</dbReference>
<dbReference type="FunFam" id="1.10.1300.10:FF:000005">
    <property type="entry name" value="Phosphodiesterase"/>
    <property type="match status" value="1"/>
</dbReference>
<dbReference type="FunFam" id="3.30.450.40:FF:000001">
    <property type="entry name" value="Phosphodiesterase"/>
    <property type="match status" value="1"/>
</dbReference>
<dbReference type="FunFam" id="3.30.450.40:FF:000010">
    <property type="entry name" value="Phosphodiesterase"/>
    <property type="match status" value="1"/>
</dbReference>
<dbReference type="Gene3D" id="3.30.450.40">
    <property type="match status" value="2"/>
</dbReference>
<dbReference type="Gene3D" id="1.10.1300.10">
    <property type="entry name" value="3'5'-cyclic nucleotide phosphodiesterase, catalytic domain"/>
    <property type="match status" value="1"/>
</dbReference>
<dbReference type="InterPro" id="IPR003018">
    <property type="entry name" value="GAF"/>
</dbReference>
<dbReference type="InterPro" id="IPR029016">
    <property type="entry name" value="GAF-like_dom_sf"/>
</dbReference>
<dbReference type="InterPro" id="IPR003607">
    <property type="entry name" value="HD/PDEase_dom"/>
</dbReference>
<dbReference type="InterPro" id="IPR023088">
    <property type="entry name" value="PDEase"/>
</dbReference>
<dbReference type="InterPro" id="IPR002073">
    <property type="entry name" value="PDEase_catalytic_dom"/>
</dbReference>
<dbReference type="InterPro" id="IPR036971">
    <property type="entry name" value="PDEase_catalytic_dom_sf"/>
</dbReference>
<dbReference type="InterPro" id="IPR023174">
    <property type="entry name" value="PDEase_CS"/>
</dbReference>
<dbReference type="PANTHER" id="PTHR11347">
    <property type="entry name" value="CYCLIC NUCLEOTIDE PHOSPHODIESTERASE"/>
    <property type="match status" value="1"/>
</dbReference>
<dbReference type="Pfam" id="PF01590">
    <property type="entry name" value="GAF"/>
    <property type="match status" value="2"/>
</dbReference>
<dbReference type="Pfam" id="PF00233">
    <property type="entry name" value="PDEase_I"/>
    <property type="match status" value="1"/>
</dbReference>
<dbReference type="PRINTS" id="PR00387">
    <property type="entry name" value="PDIESTERASE1"/>
</dbReference>
<dbReference type="SMART" id="SM00065">
    <property type="entry name" value="GAF"/>
    <property type="match status" value="2"/>
</dbReference>
<dbReference type="SMART" id="SM00471">
    <property type="entry name" value="HDc"/>
    <property type="match status" value="1"/>
</dbReference>
<dbReference type="SUPFAM" id="SSF55781">
    <property type="entry name" value="GAF domain-like"/>
    <property type="match status" value="2"/>
</dbReference>
<dbReference type="SUPFAM" id="SSF109604">
    <property type="entry name" value="HD-domain/PDEase-like"/>
    <property type="match status" value="1"/>
</dbReference>
<dbReference type="PROSITE" id="PS00126">
    <property type="entry name" value="PDEASE_I_1"/>
    <property type="match status" value="1"/>
</dbReference>
<dbReference type="PROSITE" id="PS51845">
    <property type="entry name" value="PDEASE_I_2"/>
    <property type="match status" value="1"/>
</dbReference>
<evidence type="ECO:0000250" key="1"/>
<evidence type="ECO:0000255" key="2"/>
<evidence type="ECO:0000255" key="3">
    <source>
        <dbReference type="PROSITE-ProRule" id="PRU01192"/>
    </source>
</evidence>
<evidence type="ECO:0000256" key="4">
    <source>
        <dbReference type="SAM" id="MobiDB-lite"/>
    </source>
</evidence>
<evidence type="ECO:0000269" key="5">
    <source>
    </source>
</evidence>
<evidence type="ECO:0000269" key="6">
    <source>
    </source>
</evidence>
<evidence type="ECO:0000269" key="7">
    <source>
    </source>
</evidence>
<evidence type="ECO:0000269" key="8">
    <source>
    </source>
</evidence>
<evidence type="ECO:0000269" key="9">
    <source>
    </source>
</evidence>
<evidence type="ECO:0000269" key="10">
    <source>
    </source>
</evidence>
<evidence type="ECO:0000305" key="11"/>
<evidence type="ECO:0007829" key="12">
    <source>
        <dbReference type="PDB" id="3JWQ"/>
    </source>
</evidence>
<evidence type="ECO:0007829" key="13">
    <source>
        <dbReference type="PDB" id="9CXG"/>
    </source>
</evidence>
<evidence type="ECO:0007829" key="14">
    <source>
        <dbReference type="PDB" id="9CXH"/>
    </source>
</evidence>
<evidence type="ECO:0007829" key="15">
    <source>
        <dbReference type="PDB" id="9CXI"/>
    </source>
</evidence>
<accession>P51160</accession>
<accession>A6NCR6</accession>
<accession>Q5VY29</accession>
<proteinExistence type="evidence at protein level"/>